<evidence type="ECO:0000255" key="1">
    <source>
        <dbReference type="HAMAP-Rule" id="MF_00113"/>
    </source>
</evidence>
<accession>Q0HKF8</accession>
<gene>
    <name evidence="1" type="primary">queA</name>
    <name type="ordered locus">Shewmr4_1381</name>
</gene>
<name>QUEA_SHESM</name>
<comment type="function">
    <text evidence="1">Transfers and isomerizes the ribose moiety from AdoMet to the 7-aminomethyl group of 7-deazaguanine (preQ1-tRNA) to give epoxyqueuosine (oQ-tRNA).</text>
</comment>
<comment type="catalytic activity">
    <reaction evidence="1">
        <text>7-aminomethyl-7-carbaguanosine(34) in tRNA + S-adenosyl-L-methionine = epoxyqueuosine(34) in tRNA + adenine + L-methionine + 2 H(+)</text>
        <dbReference type="Rhea" id="RHEA:32155"/>
        <dbReference type="Rhea" id="RHEA-COMP:10342"/>
        <dbReference type="Rhea" id="RHEA-COMP:18582"/>
        <dbReference type="ChEBI" id="CHEBI:15378"/>
        <dbReference type="ChEBI" id="CHEBI:16708"/>
        <dbReference type="ChEBI" id="CHEBI:57844"/>
        <dbReference type="ChEBI" id="CHEBI:59789"/>
        <dbReference type="ChEBI" id="CHEBI:82833"/>
        <dbReference type="ChEBI" id="CHEBI:194443"/>
        <dbReference type="EC" id="2.4.99.17"/>
    </reaction>
</comment>
<comment type="pathway">
    <text evidence="1">tRNA modification; tRNA-queuosine biosynthesis.</text>
</comment>
<comment type="subunit">
    <text evidence="1">Monomer.</text>
</comment>
<comment type="subcellular location">
    <subcellularLocation>
        <location evidence="1">Cytoplasm</location>
    </subcellularLocation>
</comment>
<comment type="similarity">
    <text evidence="1">Belongs to the QueA family.</text>
</comment>
<keyword id="KW-0963">Cytoplasm</keyword>
<keyword id="KW-0671">Queuosine biosynthesis</keyword>
<keyword id="KW-0949">S-adenosyl-L-methionine</keyword>
<keyword id="KW-0808">Transferase</keyword>
<protein>
    <recommendedName>
        <fullName evidence="1">S-adenosylmethionine:tRNA ribosyltransferase-isomerase</fullName>
        <ecNumber evidence="1">2.4.99.17</ecNumber>
    </recommendedName>
    <alternativeName>
        <fullName evidence="1">Queuosine biosynthesis protein QueA</fullName>
    </alternativeName>
</protein>
<dbReference type="EC" id="2.4.99.17" evidence="1"/>
<dbReference type="EMBL" id="CP000446">
    <property type="protein sequence ID" value="ABI38459.1"/>
    <property type="molecule type" value="Genomic_DNA"/>
</dbReference>
<dbReference type="RefSeq" id="WP_011622164.1">
    <property type="nucleotide sequence ID" value="NC_008321.1"/>
</dbReference>
<dbReference type="SMR" id="Q0HKF8"/>
<dbReference type="KEGG" id="she:Shewmr4_1381"/>
<dbReference type="HOGENOM" id="CLU_039110_1_0_6"/>
<dbReference type="UniPathway" id="UPA00392"/>
<dbReference type="GO" id="GO:0005737">
    <property type="term" value="C:cytoplasm"/>
    <property type="evidence" value="ECO:0007669"/>
    <property type="project" value="UniProtKB-SubCell"/>
</dbReference>
<dbReference type="GO" id="GO:0051075">
    <property type="term" value="F:S-adenosylmethionine:tRNA ribosyltransferase-isomerase activity"/>
    <property type="evidence" value="ECO:0007669"/>
    <property type="project" value="UniProtKB-EC"/>
</dbReference>
<dbReference type="GO" id="GO:0008616">
    <property type="term" value="P:queuosine biosynthetic process"/>
    <property type="evidence" value="ECO:0007669"/>
    <property type="project" value="UniProtKB-UniRule"/>
</dbReference>
<dbReference type="GO" id="GO:0002099">
    <property type="term" value="P:tRNA wobble guanine modification"/>
    <property type="evidence" value="ECO:0007669"/>
    <property type="project" value="TreeGrafter"/>
</dbReference>
<dbReference type="FunFam" id="2.40.10.240:FF:000001">
    <property type="entry name" value="S-adenosylmethionine:tRNA ribosyltransferase-isomerase"/>
    <property type="match status" value="1"/>
</dbReference>
<dbReference type="FunFam" id="3.40.1780.10:FF:000001">
    <property type="entry name" value="S-adenosylmethionine:tRNA ribosyltransferase-isomerase"/>
    <property type="match status" value="1"/>
</dbReference>
<dbReference type="Gene3D" id="2.40.10.240">
    <property type="entry name" value="QueA-like"/>
    <property type="match status" value="1"/>
</dbReference>
<dbReference type="Gene3D" id="3.40.1780.10">
    <property type="entry name" value="QueA-like"/>
    <property type="match status" value="1"/>
</dbReference>
<dbReference type="HAMAP" id="MF_00113">
    <property type="entry name" value="QueA"/>
    <property type="match status" value="1"/>
</dbReference>
<dbReference type="InterPro" id="IPR003699">
    <property type="entry name" value="QueA"/>
</dbReference>
<dbReference type="InterPro" id="IPR042118">
    <property type="entry name" value="QueA_dom1"/>
</dbReference>
<dbReference type="InterPro" id="IPR042119">
    <property type="entry name" value="QueA_dom2"/>
</dbReference>
<dbReference type="InterPro" id="IPR036100">
    <property type="entry name" value="QueA_sf"/>
</dbReference>
<dbReference type="NCBIfam" id="NF001140">
    <property type="entry name" value="PRK00147.1"/>
    <property type="match status" value="1"/>
</dbReference>
<dbReference type="NCBIfam" id="TIGR00113">
    <property type="entry name" value="queA"/>
    <property type="match status" value="1"/>
</dbReference>
<dbReference type="PANTHER" id="PTHR30307">
    <property type="entry name" value="S-ADENOSYLMETHIONINE:TRNA RIBOSYLTRANSFERASE-ISOMERASE"/>
    <property type="match status" value="1"/>
</dbReference>
<dbReference type="PANTHER" id="PTHR30307:SF0">
    <property type="entry name" value="S-ADENOSYLMETHIONINE:TRNA RIBOSYLTRANSFERASE-ISOMERASE"/>
    <property type="match status" value="1"/>
</dbReference>
<dbReference type="Pfam" id="PF02547">
    <property type="entry name" value="Queuosine_synth"/>
    <property type="match status" value="1"/>
</dbReference>
<dbReference type="SUPFAM" id="SSF111337">
    <property type="entry name" value="QueA-like"/>
    <property type="match status" value="1"/>
</dbReference>
<feature type="chain" id="PRO_1000015275" description="S-adenosylmethionine:tRNA ribosyltransferase-isomerase">
    <location>
        <begin position="1"/>
        <end position="345"/>
    </location>
</feature>
<reference key="1">
    <citation type="submission" date="2006-08" db="EMBL/GenBank/DDBJ databases">
        <title>Complete sequence of Shewanella sp. MR-4.</title>
        <authorList>
            <consortium name="US DOE Joint Genome Institute"/>
            <person name="Copeland A."/>
            <person name="Lucas S."/>
            <person name="Lapidus A."/>
            <person name="Barry K."/>
            <person name="Detter J.C."/>
            <person name="Glavina del Rio T."/>
            <person name="Hammon N."/>
            <person name="Israni S."/>
            <person name="Dalin E."/>
            <person name="Tice H."/>
            <person name="Pitluck S."/>
            <person name="Kiss H."/>
            <person name="Brettin T."/>
            <person name="Bruce D."/>
            <person name="Han C."/>
            <person name="Tapia R."/>
            <person name="Gilna P."/>
            <person name="Schmutz J."/>
            <person name="Larimer F."/>
            <person name="Land M."/>
            <person name="Hauser L."/>
            <person name="Kyrpides N."/>
            <person name="Mikhailova N."/>
            <person name="Nealson K."/>
            <person name="Konstantinidis K."/>
            <person name="Klappenbach J."/>
            <person name="Tiedje J."/>
            <person name="Richardson P."/>
        </authorList>
    </citation>
    <scope>NUCLEOTIDE SEQUENCE [LARGE SCALE GENOMIC DNA]</scope>
    <source>
        <strain>MR-4</strain>
    </source>
</reference>
<sequence length="345" mass="38145">MRVTDFSFDLPDELIARYPMAQRNASRLLTLDGNTGTLADKQFTDLLGMINPGDLMVFNNTRVIPARLFGQKASGGKLEILVERMLDDKRILAHVRSSKSPKVDSIIHLDGGYEMKMAARHDALFELELLSDLTILEVLEAVGHMPLPPYIDRPDEDADKERYQTVYNQNPGAVAAPTAGLHFDDAMLDALKAKGVNIAFVTLHVGAGTFQPVRVDNVLEHKMHSEWANVPQDVVDLIAQTKAAGKRVVAVGTTSVRSLESAARASEGELKAFSGDTDIFIYPGYQFQIVDAMITNFHLPESTLIMLVSAFAGFDHVMAAYQHAITQKYRFFSYGDAMFVTKKAH</sequence>
<organism>
    <name type="scientific">Shewanella sp. (strain MR-4)</name>
    <dbReference type="NCBI Taxonomy" id="60480"/>
    <lineage>
        <taxon>Bacteria</taxon>
        <taxon>Pseudomonadati</taxon>
        <taxon>Pseudomonadota</taxon>
        <taxon>Gammaproteobacteria</taxon>
        <taxon>Alteromonadales</taxon>
        <taxon>Shewanellaceae</taxon>
        <taxon>Shewanella</taxon>
    </lineage>
</organism>
<proteinExistence type="inferred from homology"/>